<gene>
    <name evidence="1" type="primary">sotB</name>
    <name type="ordered locus">jhp_1111</name>
</gene>
<comment type="function">
    <text evidence="1">Involved in the efflux of sugars. The physiological role may be the reduction of the intracellular concentration of toxic sugars or sugar metabolites.</text>
</comment>
<comment type="subcellular location">
    <subcellularLocation>
        <location evidence="1">Cell inner membrane</location>
        <topology evidence="1">Multi-pass membrane protein</topology>
    </subcellularLocation>
</comment>
<comment type="similarity">
    <text evidence="1">Belongs to the major facilitator superfamily. SotB (TC 2.A.1.2) family.</text>
</comment>
<protein>
    <recommendedName>
        <fullName evidence="1">Probable sugar efflux transporter</fullName>
    </recommendedName>
</protein>
<organism>
    <name type="scientific">Helicobacter pylori (strain J99 / ATCC 700824)</name>
    <name type="common">Campylobacter pylori J99</name>
    <dbReference type="NCBI Taxonomy" id="85963"/>
    <lineage>
        <taxon>Bacteria</taxon>
        <taxon>Pseudomonadati</taxon>
        <taxon>Campylobacterota</taxon>
        <taxon>Epsilonproteobacteria</taxon>
        <taxon>Campylobacterales</taxon>
        <taxon>Helicobacteraceae</taxon>
        <taxon>Helicobacter</taxon>
    </lineage>
</organism>
<sequence length="391" mass="43312">MMITKQSYQRFALMRVFVFSLSAFIFNTTEFVPVALLSDIAKSFEMESATVGLMITAYAWVVSLGSLPLMLLSAKIERKRLLLFLFALFIFSHILSALAWNFWVLLLSRMGIAFAHSIFWSITASLVIRVAPRNKKQQALGLLALGSSLAMILGLPLGRIIGQILDWRSTFGVIGGVATLIMLLMWKLLPHLPSRNAGTLASVPILMKRPLLVGIYLLVIMVISGHFTTYSYIEPFIIQISQFSPDITTLMLFVFGLAGVVGSFLFGRLYAKNSRKFIAFAMVLVICPQLLLFVFKNLEWVIFLQIFLWGIGITSLTIALQMRVLQLAPDATDVASAIFSGSYNVGIGSGALFGSIVIHQLGLEYIGFVGGALGLLALFWLRFITIKFKKT</sequence>
<name>SOTB_HELPJ</name>
<accession>Q9ZK31</accession>
<dbReference type="EMBL" id="AE001439">
    <property type="protein sequence ID" value="AAD06692.1"/>
    <property type="molecule type" value="Genomic_DNA"/>
</dbReference>
<dbReference type="PIR" id="H71846">
    <property type="entry name" value="H71846"/>
</dbReference>
<dbReference type="RefSeq" id="WP_000973621.1">
    <property type="nucleotide sequence ID" value="NC_000921.1"/>
</dbReference>
<dbReference type="SMR" id="Q9ZK31"/>
<dbReference type="KEGG" id="hpj:jhp_1111"/>
<dbReference type="PATRIC" id="fig|85963.30.peg.1468"/>
<dbReference type="eggNOG" id="COG2814">
    <property type="taxonomic scope" value="Bacteria"/>
</dbReference>
<dbReference type="Proteomes" id="UP000000804">
    <property type="component" value="Chromosome"/>
</dbReference>
<dbReference type="GO" id="GO:0005886">
    <property type="term" value="C:plasma membrane"/>
    <property type="evidence" value="ECO:0007669"/>
    <property type="project" value="UniProtKB-SubCell"/>
</dbReference>
<dbReference type="GO" id="GO:0015144">
    <property type="term" value="F:carbohydrate transmembrane transporter activity"/>
    <property type="evidence" value="ECO:0007669"/>
    <property type="project" value="UniProtKB-UniRule"/>
</dbReference>
<dbReference type="CDD" id="cd17324">
    <property type="entry name" value="MFS_NepI_like"/>
    <property type="match status" value="1"/>
</dbReference>
<dbReference type="Gene3D" id="1.20.1250.20">
    <property type="entry name" value="MFS general substrate transporter like domains"/>
    <property type="match status" value="1"/>
</dbReference>
<dbReference type="HAMAP" id="MF_00517">
    <property type="entry name" value="MFS_SotB"/>
    <property type="match status" value="1"/>
</dbReference>
<dbReference type="InterPro" id="IPR011701">
    <property type="entry name" value="MFS"/>
</dbReference>
<dbReference type="InterPro" id="IPR020846">
    <property type="entry name" value="MFS_dom"/>
</dbReference>
<dbReference type="InterPro" id="IPR050189">
    <property type="entry name" value="MFS_Efflux_Transporters"/>
</dbReference>
<dbReference type="InterPro" id="IPR036259">
    <property type="entry name" value="MFS_trans_sf"/>
</dbReference>
<dbReference type="InterPro" id="IPR023495">
    <property type="entry name" value="Sugar_effux_transptr_put"/>
</dbReference>
<dbReference type="NCBIfam" id="NF002921">
    <property type="entry name" value="PRK03545.1"/>
    <property type="match status" value="1"/>
</dbReference>
<dbReference type="PANTHER" id="PTHR43124">
    <property type="entry name" value="PURINE EFFLUX PUMP PBUE"/>
    <property type="match status" value="1"/>
</dbReference>
<dbReference type="PANTHER" id="PTHR43124:SF4">
    <property type="entry name" value="SUGAR EFFLUX TRANSPORTER"/>
    <property type="match status" value="1"/>
</dbReference>
<dbReference type="Pfam" id="PF07690">
    <property type="entry name" value="MFS_1"/>
    <property type="match status" value="1"/>
</dbReference>
<dbReference type="SUPFAM" id="SSF103473">
    <property type="entry name" value="MFS general substrate transporter"/>
    <property type="match status" value="1"/>
</dbReference>
<dbReference type="PROSITE" id="PS50850">
    <property type="entry name" value="MFS"/>
    <property type="match status" value="1"/>
</dbReference>
<proteinExistence type="inferred from homology"/>
<feature type="chain" id="PRO_0000209329" description="Probable sugar efflux transporter">
    <location>
        <begin position="1"/>
        <end position="391"/>
    </location>
</feature>
<feature type="transmembrane region" description="Helical" evidence="1">
    <location>
        <begin position="16"/>
        <end position="36"/>
    </location>
</feature>
<feature type="transmembrane region" description="Helical" evidence="1">
    <location>
        <begin position="51"/>
        <end position="71"/>
    </location>
</feature>
<feature type="transmembrane region" description="Helical" evidence="1">
    <location>
        <begin position="82"/>
        <end position="102"/>
    </location>
</feature>
<feature type="transmembrane region" description="Helical" evidence="1">
    <location>
        <begin position="110"/>
        <end position="130"/>
    </location>
</feature>
<feature type="transmembrane region" description="Helical" evidence="1">
    <location>
        <begin position="138"/>
        <end position="158"/>
    </location>
</feature>
<feature type="transmembrane region" description="Helical" evidence="1">
    <location>
        <begin position="170"/>
        <end position="190"/>
    </location>
</feature>
<feature type="transmembrane region" description="Helical" evidence="1">
    <location>
        <begin position="210"/>
        <end position="230"/>
    </location>
</feature>
<feature type="transmembrane region" description="Helical" evidence="1">
    <location>
        <begin position="247"/>
        <end position="267"/>
    </location>
</feature>
<feature type="transmembrane region" description="Helical" evidence="1">
    <location>
        <begin position="277"/>
        <end position="297"/>
    </location>
</feature>
<feature type="transmembrane region" description="Helical" evidence="1">
    <location>
        <begin position="300"/>
        <end position="320"/>
    </location>
</feature>
<feature type="transmembrane region" description="Helical" evidence="1">
    <location>
        <begin position="338"/>
        <end position="358"/>
    </location>
</feature>
<feature type="transmembrane region" description="Helical" evidence="1">
    <location>
        <begin position="361"/>
        <end position="381"/>
    </location>
</feature>
<evidence type="ECO:0000255" key="1">
    <source>
        <dbReference type="HAMAP-Rule" id="MF_00517"/>
    </source>
</evidence>
<keyword id="KW-0997">Cell inner membrane</keyword>
<keyword id="KW-1003">Cell membrane</keyword>
<keyword id="KW-0472">Membrane</keyword>
<keyword id="KW-0762">Sugar transport</keyword>
<keyword id="KW-0812">Transmembrane</keyword>
<keyword id="KW-1133">Transmembrane helix</keyword>
<keyword id="KW-0813">Transport</keyword>
<reference key="1">
    <citation type="journal article" date="1999" name="Nature">
        <title>Genomic sequence comparison of two unrelated isolates of the human gastric pathogen Helicobacter pylori.</title>
        <authorList>
            <person name="Alm R.A."/>
            <person name="Ling L.-S.L."/>
            <person name="Moir D.T."/>
            <person name="King B.L."/>
            <person name="Brown E.D."/>
            <person name="Doig P.C."/>
            <person name="Smith D.R."/>
            <person name="Noonan B."/>
            <person name="Guild B.C."/>
            <person name="deJonge B.L."/>
            <person name="Carmel G."/>
            <person name="Tummino P.J."/>
            <person name="Caruso A."/>
            <person name="Uria-Nickelsen M."/>
            <person name="Mills D.M."/>
            <person name="Ives C."/>
            <person name="Gibson R."/>
            <person name="Merberg D."/>
            <person name="Mills S.D."/>
            <person name="Jiang Q."/>
            <person name="Taylor D.E."/>
            <person name="Vovis G.F."/>
            <person name="Trust T.J."/>
        </authorList>
    </citation>
    <scope>NUCLEOTIDE SEQUENCE [LARGE SCALE GENOMIC DNA]</scope>
    <source>
        <strain>J99 / ATCC 700824</strain>
    </source>
</reference>